<organism evidence="11">
    <name type="scientific">Arabidopsis thaliana</name>
    <name type="common">Mouse-ear cress</name>
    <dbReference type="NCBI Taxonomy" id="3702"/>
    <lineage>
        <taxon>Eukaryota</taxon>
        <taxon>Viridiplantae</taxon>
        <taxon>Streptophyta</taxon>
        <taxon>Embryophyta</taxon>
        <taxon>Tracheophyta</taxon>
        <taxon>Spermatophyta</taxon>
        <taxon>Magnoliopsida</taxon>
        <taxon>eudicotyledons</taxon>
        <taxon>Gunneridae</taxon>
        <taxon>Pentapetalae</taxon>
        <taxon>rosids</taxon>
        <taxon>malvids</taxon>
        <taxon>Brassicales</taxon>
        <taxon>Brassicaceae</taxon>
        <taxon>Camelineae</taxon>
        <taxon>Arabidopsis</taxon>
    </lineage>
</organism>
<proteinExistence type="evidence at transcript level"/>
<protein>
    <recommendedName>
        <fullName evidence="5">RPW8-like protein 3</fullName>
        <shortName evidence="6">AtHR3</shortName>
    </recommendedName>
</protein>
<feature type="chain" id="PRO_0000431673" description="RPW8-like protein 3">
    <location>
        <begin position="1"/>
        <end position="213"/>
    </location>
</feature>
<feature type="transmembrane region" description="Helical" evidence="1">
    <location>
        <begin position="7"/>
        <end position="23"/>
    </location>
</feature>
<feature type="domain" description="RPW8" evidence="2">
    <location>
        <begin position="1"/>
        <end position="153"/>
    </location>
</feature>
<feature type="coiled-coil region" evidence="1">
    <location>
        <begin position="70"/>
        <end position="93"/>
    </location>
</feature>
<feature type="coiled-coil region" evidence="1">
    <location>
        <begin position="125"/>
        <end position="147"/>
    </location>
</feature>
<feature type="glycosylation site" description="N-linked (GlcNAc...) asparagine" evidence="3">
    <location>
        <position position="157"/>
    </location>
</feature>
<feature type="sequence conflict" description="In Ref. 2; AIE47874." evidence="8" ref="2">
    <original>S</original>
    <variation>C</variation>
    <location>
        <position position="81"/>
    </location>
</feature>
<feature type="sequence conflict" description="In Ref. 2; AIE47874." evidence="8" ref="2">
    <original>N</original>
    <variation>K</variation>
    <location>
        <position position="157"/>
    </location>
</feature>
<name>HR3_ARATH</name>
<dbReference type="EMBL" id="AF273059">
    <property type="protein sequence ID" value="AAK09268.1"/>
    <property type="molecule type" value="Genomic_DNA"/>
</dbReference>
<dbReference type="EMBL" id="KJ634211">
    <property type="protein sequence ID" value="AIE47874.1"/>
    <property type="molecule type" value="Genomic_DNA"/>
</dbReference>
<dbReference type="EMBL" id="AL133363">
    <property type="protein sequence ID" value="CAB62476.1"/>
    <property type="molecule type" value="Genomic_DNA"/>
</dbReference>
<dbReference type="EMBL" id="CP002686">
    <property type="protein sequence ID" value="AEE78670.1"/>
    <property type="molecule type" value="Genomic_DNA"/>
</dbReference>
<dbReference type="EMBL" id="AK175750">
    <property type="protein sequence ID" value="BAD43513.1"/>
    <property type="molecule type" value="mRNA"/>
</dbReference>
<dbReference type="PIR" id="T46078">
    <property type="entry name" value="T46078"/>
</dbReference>
<dbReference type="RefSeq" id="NP_190616.1">
    <property type="nucleotide sequence ID" value="NM_114907.3"/>
</dbReference>
<dbReference type="SMR" id="Q9SCS7"/>
<dbReference type="FunCoup" id="Q9SCS7">
    <property type="interactions" value="13"/>
</dbReference>
<dbReference type="STRING" id="3702.Q9SCS7"/>
<dbReference type="GlyCosmos" id="Q9SCS7">
    <property type="glycosylation" value="1 site, No reported glycans"/>
</dbReference>
<dbReference type="GlyGen" id="Q9SCS7">
    <property type="glycosylation" value="1 site"/>
</dbReference>
<dbReference type="PaxDb" id="3702-AT3G50470.1"/>
<dbReference type="ProteomicsDB" id="228746"/>
<dbReference type="EnsemblPlants" id="AT3G50470.1">
    <property type="protein sequence ID" value="AT3G50470.1"/>
    <property type="gene ID" value="AT3G50470"/>
</dbReference>
<dbReference type="GeneID" id="824211"/>
<dbReference type="Gramene" id="AT3G50470.1">
    <property type="protein sequence ID" value="AT3G50470.1"/>
    <property type="gene ID" value="AT3G50470"/>
</dbReference>
<dbReference type="KEGG" id="ath:AT3G50470"/>
<dbReference type="Araport" id="AT3G50470"/>
<dbReference type="TAIR" id="AT3G50470">
    <property type="gene designation" value="HR3"/>
</dbReference>
<dbReference type="eggNOG" id="ENOG502SXRU">
    <property type="taxonomic scope" value="Eukaryota"/>
</dbReference>
<dbReference type="HOGENOM" id="CLU_1436271_0_0_1"/>
<dbReference type="InParanoid" id="Q9SCS7"/>
<dbReference type="OMA" id="DEITRQP"/>
<dbReference type="PhylomeDB" id="Q9SCS7"/>
<dbReference type="PRO" id="PR:Q9SCS7"/>
<dbReference type="Proteomes" id="UP000006548">
    <property type="component" value="Chromosome 3"/>
</dbReference>
<dbReference type="ExpressionAtlas" id="Q9SCS7">
    <property type="expression patterns" value="baseline and differential"/>
</dbReference>
<dbReference type="GO" id="GO:0016020">
    <property type="term" value="C:membrane"/>
    <property type="evidence" value="ECO:0007669"/>
    <property type="project" value="UniProtKB-SubCell"/>
</dbReference>
<dbReference type="GO" id="GO:0009626">
    <property type="term" value="P:plant-type hypersensitive response"/>
    <property type="evidence" value="ECO:0007669"/>
    <property type="project" value="UniProtKB-KW"/>
</dbReference>
<dbReference type="GO" id="GO:0009620">
    <property type="term" value="P:response to fungus"/>
    <property type="evidence" value="ECO:0000270"/>
    <property type="project" value="UniProtKB"/>
</dbReference>
<dbReference type="InterPro" id="IPR008808">
    <property type="entry name" value="Powdery_mildew-R_dom"/>
</dbReference>
<dbReference type="Pfam" id="PF05659">
    <property type="entry name" value="RPW8"/>
    <property type="match status" value="1"/>
</dbReference>
<dbReference type="PROSITE" id="PS51153">
    <property type="entry name" value="RPW8"/>
    <property type="match status" value="1"/>
</dbReference>
<comment type="function">
    <text evidence="8">Probable disease resistance (R) protein.</text>
</comment>
<comment type="subcellular location">
    <subcellularLocation>
        <location evidence="1">Membrane</location>
        <topology evidence="1">Single-pass membrane protein</topology>
    </subcellularLocation>
</comment>
<comment type="induction">
    <text evidence="4">Expressed in leaves after powdery mildew infection (e.g. Erysiphe cichoracearum UCSC1).</text>
</comment>
<comment type="similarity">
    <text evidence="8">Belongs to the plant RPW8 protein family.</text>
</comment>
<accession>Q9SCS7</accession>
<accession>A0A068LKP2</accession>
<sequence length="213" mass="24690">MPVSEIMAGAALGLALQVLHDAIKKAKDRSLTTRCILDRLDATIFRITPLVTQVDKLSEEVEDSPRKVIEDLKHLLEKAVSLVEAYAELRRRNLLKKFRYKRRIKELEASLRWMVDVDVQVNQWVDIKELMAKMSEMNTKLDEITRQPTDCICFKSNHSTSQSSSQNIVEETDRSLEEIVECSSDGSKPKIDIHIHWSSRKRNKDREIRFVLK</sequence>
<gene>
    <name evidence="5" type="primary">HR3</name>
    <name evidence="7" type="synonym">HR3KZ10</name>
    <name evidence="9" type="ordered locus">At3g50470</name>
    <name evidence="10" type="ORF">T20E23.70</name>
</gene>
<reference key="1">
    <citation type="journal article" date="2001" name="Science">
        <title>Broad-spectrum mildew resistance in Arabidopsis thaliana mediated by RPW8.</title>
        <authorList>
            <person name="Xiao S."/>
            <person name="Ellwood S."/>
            <person name="Calis O."/>
            <person name="Patrick E."/>
            <person name="Li T."/>
            <person name="Coleman M."/>
            <person name="Turner J.G."/>
        </authorList>
    </citation>
    <scope>NUCLEOTIDE SEQUENCE [GENOMIC DNA]</scope>
    <scope>GENE FAMILY</scope>
    <scope>NOMENCLATURE</scope>
    <source>
        <strain>cv. Ms-0</strain>
    </source>
</reference>
<reference key="2">
    <citation type="submission" date="2014-03" db="EMBL/GenBank/DDBJ databases">
        <title>A species-wide analysis of genetic incompatibilities identifies NLR loci as hotspots of deleterious epistasis.</title>
        <authorList>
            <person name="Chae E."/>
            <person name="Bomblies K."/>
            <person name="Kim S.-T."/>
            <person name="Karelina D."/>
            <person name="Zaidem M."/>
            <person name="Ossowski S."/>
            <person name="Martin Pizarro C."/>
            <person name="Laitinen R.A."/>
            <person name="Rowan B.A."/>
            <person name="Tenenboim H."/>
            <person name="Lechner S."/>
            <person name="Demar M."/>
            <person name="Habring-Mueller A."/>
            <person name="Lanz C."/>
            <person name="Raetsch G."/>
            <person name="Weigel D."/>
        </authorList>
    </citation>
    <scope>NUCLEOTIDE SEQUENCE [GENOMIC DNA]</scope>
</reference>
<reference key="3">
    <citation type="journal article" date="2000" name="Nature">
        <title>Sequence and analysis of chromosome 3 of the plant Arabidopsis thaliana.</title>
        <authorList>
            <person name="Salanoubat M."/>
            <person name="Lemcke K."/>
            <person name="Rieger M."/>
            <person name="Ansorge W."/>
            <person name="Unseld M."/>
            <person name="Fartmann B."/>
            <person name="Valle G."/>
            <person name="Bloecker H."/>
            <person name="Perez-Alonso M."/>
            <person name="Obermaier B."/>
            <person name="Delseny M."/>
            <person name="Boutry M."/>
            <person name="Grivell L.A."/>
            <person name="Mache R."/>
            <person name="Puigdomenech P."/>
            <person name="De Simone V."/>
            <person name="Choisne N."/>
            <person name="Artiguenave F."/>
            <person name="Robert C."/>
            <person name="Brottier P."/>
            <person name="Wincker P."/>
            <person name="Cattolico L."/>
            <person name="Weissenbach J."/>
            <person name="Saurin W."/>
            <person name="Quetier F."/>
            <person name="Schaefer M."/>
            <person name="Mueller-Auer S."/>
            <person name="Gabel C."/>
            <person name="Fuchs M."/>
            <person name="Benes V."/>
            <person name="Wurmbach E."/>
            <person name="Drzonek H."/>
            <person name="Erfle H."/>
            <person name="Jordan N."/>
            <person name="Bangert S."/>
            <person name="Wiedelmann R."/>
            <person name="Kranz H."/>
            <person name="Voss H."/>
            <person name="Holland R."/>
            <person name="Brandt P."/>
            <person name="Nyakatura G."/>
            <person name="Vezzi A."/>
            <person name="D'Angelo M."/>
            <person name="Pallavicini A."/>
            <person name="Toppo S."/>
            <person name="Simionati B."/>
            <person name="Conrad A."/>
            <person name="Hornischer K."/>
            <person name="Kauer G."/>
            <person name="Loehnert T.-H."/>
            <person name="Nordsiek G."/>
            <person name="Reichelt J."/>
            <person name="Scharfe M."/>
            <person name="Schoen O."/>
            <person name="Bargues M."/>
            <person name="Terol J."/>
            <person name="Climent J."/>
            <person name="Navarro P."/>
            <person name="Collado C."/>
            <person name="Perez-Perez A."/>
            <person name="Ottenwaelder B."/>
            <person name="Duchemin D."/>
            <person name="Cooke R."/>
            <person name="Laudie M."/>
            <person name="Berger-Llauro C."/>
            <person name="Purnelle B."/>
            <person name="Masuy D."/>
            <person name="de Haan M."/>
            <person name="Maarse A.C."/>
            <person name="Alcaraz J.-P."/>
            <person name="Cottet A."/>
            <person name="Casacuberta E."/>
            <person name="Monfort A."/>
            <person name="Argiriou A."/>
            <person name="Flores M."/>
            <person name="Liguori R."/>
            <person name="Vitale D."/>
            <person name="Mannhaupt G."/>
            <person name="Haase D."/>
            <person name="Schoof H."/>
            <person name="Rudd S."/>
            <person name="Zaccaria P."/>
            <person name="Mewes H.-W."/>
            <person name="Mayer K.F.X."/>
            <person name="Kaul S."/>
            <person name="Town C.D."/>
            <person name="Koo H.L."/>
            <person name="Tallon L.J."/>
            <person name="Jenkins J."/>
            <person name="Rooney T."/>
            <person name="Rizzo M."/>
            <person name="Walts A."/>
            <person name="Utterback T."/>
            <person name="Fujii C.Y."/>
            <person name="Shea T.P."/>
            <person name="Creasy T.H."/>
            <person name="Haas B."/>
            <person name="Maiti R."/>
            <person name="Wu D."/>
            <person name="Peterson J."/>
            <person name="Van Aken S."/>
            <person name="Pai G."/>
            <person name="Militscher J."/>
            <person name="Sellers P."/>
            <person name="Gill J.E."/>
            <person name="Feldblyum T.V."/>
            <person name="Preuss D."/>
            <person name="Lin X."/>
            <person name="Nierman W.C."/>
            <person name="Salzberg S.L."/>
            <person name="White O."/>
            <person name="Venter J.C."/>
            <person name="Fraser C.M."/>
            <person name="Kaneko T."/>
            <person name="Nakamura Y."/>
            <person name="Sato S."/>
            <person name="Kato T."/>
            <person name="Asamizu E."/>
            <person name="Sasamoto S."/>
            <person name="Kimura T."/>
            <person name="Idesawa K."/>
            <person name="Kawashima K."/>
            <person name="Kishida Y."/>
            <person name="Kiyokawa C."/>
            <person name="Kohara M."/>
            <person name="Matsumoto M."/>
            <person name="Matsuno A."/>
            <person name="Muraki A."/>
            <person name="Nakayama S."/>
            <person name="Nakazaki N."/>
            <person name="Shinpo S."/>
            <person name="Takeuchi C."/>
            <person name="Wada T."/>
            <person name="Watanabe A."/>
            <person name="Yamada M."/>
            <person name="Yasuda M."/>
            <person name="Tabata S."/>
        </authorList>
    </citation>
    <scope>NUCLEOTIDE SEQUENCE [LARGE SCALE GENOMIC DNA]</scope>
    <source>
        <strain>cv. Columbia</strain>
    </source>
</reference>
<reference key="4">
    <citation type="journal article" date="2017" name="Plant J.">
        <title>Araport11: a complete reannotation of the Arabidopsis thaliana reference genome.</title>
        <authorList>
            <person name="Cheng C.Y."/>
            <person name="Krishnakumar V."/>
            <person name="Chan A.P."/>
            <person name="Thibaud-Nissen F."/>
            <person name="Schobel S."/>
            <person name="Town C.D."/>
        </authorList>
    </citation>
    <scope>GENOME REANNOTATION</scope>
    <source>
        <strain>cv. Columbia</strain>
    </source>
</reference>
<reference key="5">
    <citation type="submission" date="2004-09" db="EMBL/GenBank/DDBJ databases">
        <title>Large-scale analysis of RIKEN Arabidopsis full-length (RAFL) cDNAs.</title>
        <authorList>
            <person name="Totoki Y."/>
            <person name="Seki M."/>
            <person name="Ishida J."/>
            <person name="Nakajima M."/>
            <person name="Enju A."/>
            <person name="Kamiya A."/>
            <person name="Narusaka M."/>
            <person name="Shin-i T."/>
            <person name="Nakagawa M."/>
            <person name="Sakamoto N."/>
            <person name="Oishi K."/>
            <person name="Kohara Y."/>
            <person name="Kobayashi M."/>
            <person name="Toyoda A."/>
            <person name="Sakaki Y."/>
            <person name="Sakurai T."/>
            <person name="Iida K."/>
            <person name="Akiyama K."/>
            <person name="Satou M."/>
            <person name="Toyoda T."/>
            <person name="Konagaya A."/>
            <person name="Carninci P."/>
            <person name="Kawai J."/>
            <person name="Hayashizaki Y."/>
            <person name="Shinozaki K."/>
        </authorList>
    </citation>
    <scope>NUCLEOTIDE SEQUENCE [LARGE SCALE MRNA]</scope>
    <source>
        <strain>cv. Columbia</strain>
    </source>
</reference>
<reference key="6">
    <citation type="journal article" date="2004" name="Mol. Biol. Evol.">
        <title>Origin and maintenance of a broad-spectrum disease resistance locus in Arabidopsis.</title>
        <authorList>
            <person name="Xiao S."/>
            <person name="Emerson B."/>
            <person name="Ratanasut K."/>
            <person name="Patrick E."/>
            <person name="O'Neill C."/>
            <person name="Bancroft I."/>
            <person name="Turner J.G."/>
        </authorList>
    </citation>
    <scope>INDUCTION BY ERYSIPHE CICHORACEARUM</scope>
    <scope>GENE FAMILY</scope>
</reference>
<keyword id="KW-0175">Coiled coil</keyword>
<keyword id="KW-0325">Glycoprotein</keyword>
<keyword id="KW-0381">Hypersensitive response</keyword>
<keyword id="KW-0472">Membrane</keyword>
<keyword id="KW-0611">Plant defense</keyword>
<keyword id="KW-1185">Reference proteome</keyword>
<keyword id="KW-0812">Transmembrane</keyword>
<keyword id="KW-1133">Transmembrane helix</keyword>
<evidence type="ECO:0000255" key="1"/>
<evidence type="ECO:0000255" key="2">
    <source>
        <dbReference type="PROSITE-ProRule" id="PRU00495"/>
    </source>
</evidence>
<evidence type="ECO:0000255" key="3">
    <source>
        <dbReference type="PROSITE-ProRule" id="PRU00498"/>
    </source>
</evidence>
<evidence type="ECO:0000269" key="4">
    <source>
    </source>
</evidence>
<evidence type="ECO:0000303" key="5">
    <source>
    </source>
</evidence>
<evidence type="ECO:0000303" key="6">
    <source>
    </source>
</evidence>
<evidence type="ECO:0000303" key="7">
    <source ref="2"/>
</evidence>
<evidence type="ECO:0000305" key="8"/>
<evidence type="ECO:0000312" key="9">
    <source>
        <dbReference type="Araport" id="AT3G50470"/>
    </source>
</evidence>
<evidence type="ECO:0000312" key="10">
    <source>
        <dbReference type="EMBL" id="CAB62476.1"/>
    </source>
</evidence>
<evidence type="ECO:0000312" key="11">
    <source>
        <dbReference type="Proteomes" id="UP000006548"/>
    </source>
</evidence>